<comment type="function">
    <text evidence="1">Negative regulator of class I heat shock genes (grpE-dnaK-dnaJ and groELS operons). Prevents heat-shock induction of these operons.</text>
</comment>
<comment type="similarity">
    <text evidence="1">Belongs to the HrcA family.</text>
</comment>
<proteinExistence type="inferred from homology"/>
<protein>
    <recommendedName>
        <fullName evidence="1">Heat-inducible transcription repressor HrcA</fullName>
    </recommendedName>
</protein>
<reference key="1">
    <citation type="journal article" date="2006" name="Proc. Natl. Acad. Sci. U.S.A.">
        <title>Comparative genomics of the lactic acid bacteria.</title>
        <authorList>
            <person name="Makarova K.S."/>
            <person name="Slesarev A."/>
            <person name="Wolf Y.I."/>
            <person name="Sorokin A."/>
            <person name="Mirkin B."/>
            <person name="Koonin E.V."/>
            <person name="Pavlov A."/>
            <person name="Pavlova N."/>
            <person name="Karamychev V."/>
            <person name="Polouchine N."/>
            <person name="Shakhova V."/>
            <person name="Grigoriev I."/>
            <person name="Lou Y."/>
            <person name="Rohksar D."/>
            <person name="Lucas S."/>
            <person name="Huang K."/>
            <person name="Goodstein D.M."/>
            <person name="Hawkins T."/>
            <person name="Plengvidhya V."/>
            <person name="Welker D."/>
            <person name="Hughes J."/>
            <person name="Goh Y."/>
            <person name="Benson A."/>
            <person name="Baldwin K."/>
            <person name="Lee J.-H."/>
            <person name="Diaz-Muniz I."/>
            <person name="Dosti B."/>
            <person name="Smeianov V."/>
            <person name="Wechter W."/>
            <person name="Barabote R."/>
            <person name="Lorca G."/>
            <person name="Altermann E."/>
            <person name="Barrangou R."/>
            <person name="Ganesan B."/>
            <person name="Xie Y."/>
            <person name="Rawsthorne H."/>
            <person name="Tamir D."/>
            <person name="Parker C."/>
            <person name="Breidt F."/>
            <person name="Broadbent J.R."/>
            <person name="Hutkins R."/>
            <person name="O'Sullivan D."/>
            <person name="Steele J."/>
            <person name="Unlu G."/>
            <person name="Saier M.H. Jr."/>
            <person name="Klaenhammer T."/>
            <person name="Richardson P."/>
            <person name="Kozyavkin S."/>
            <person name="Weimer B.C."/>
            <person name="Mills D.A."/>
        </authorList>
    </citation>
    <scope>NUCLEOTIDE SEQUENCE [LARGE SCALE GENOMIC DNA]</scope>
    <source>
        <strain>ATCC 25745 / CCUG 21536 / LMG 10740 / 183-1w</strain>
    </source>
</reference>
<sequence>MLTDRELLILEEIVREYTENGQPIGSKTLMNNLPVKVSSATIRNDMAKLEEMGLIEKMHSSSGRIPSLMGYRYYVDHLLSPKKLNQSEAQQIQKGLGMHFREVDDIVRTSAEMLSNLTHYTALTLKPDQKDATLDGFRMVPLGGNQVMLILVSSNGDVTSQQFSIPRGMNSETVERVLRIMNDRLIGETLDQVYYHLKTDIPKIVEHYLHSNDGIIDIFENVVAQSSQDRYFIGGKLNILNFSKNVDVSSIRGLLTLFNENDQLDGLLGNNQSDLDVKIGDELSNALLKDFSLITATYDVGSRGKGLIAILGPTSMQYSKTLGLLDTFRDQLSNRMLEYYKHLDDS</sequence>
<keyword id="KW-0678">Repressor</keyword>
<keyword id="KW-0346">Stress response</keyword>
<keyword id="KW-0804">Transcription</keyword>
<keyword id="KW-0805">Transcription regulation</keyword>
<gene>
    <name evidence="1" type="primary">hrcA</name>
    <name type="ordered locus">PEPE_0894</name>
</gene>
<dbReference type="EMBL" id="CP000422">
    <property type="protein sequence ID" value="ABJ67953.1"/>
    <property type="molecule type" value="Genomic_DNA"/>
</dbReference>
<dbReference type="RefSeq" id="WP_002833622.1">
    <property type="nucleotide sequence ID" value="NC_008525.1"/>
</dbReference>
<dbReference type="SMR" id="Q03FR9"/>
<dbReference type="STRING" id="278197.PEPE_0894"/>
<dbReference type="DNASU" id="4417872"/>
<dbReference type="GeneID" id="33061776"/>
<dbReference type="KEGG" id="ppe:PEPE_0894"/>
<dbReference type="eggNOG" id="COG1420">
    <property type="taxonomic scope" value="Bacteria"/>
</dbReference>
<dbReference type="HOGENOM" id="CLU_050019_1_0_9"/>
<dbReference type="OrthoDB" id="9783139at2"/>
<dbReference type="Proteomes" id="UP000000773">
    <property type="component" value="Chromosome"/>
</dbReference>
<dbReference type="GO" id="GO:0003677">
    <property type="term" value="F:DNA binding"/>
    <property type="evidence" value="ECO:0007669"/>
    <property type="project" value="InterPro"/>
</dbReference>
<dbReference type="GO" id="GO:0003700">
    <property type="term" value="F:DNA-binding transcription factor activity"/>
    <property type="evidence" value="ECO:0007669"/>
    <property type="project" value="InterPro"/>
</dbReference>
<dbReference type="GO" id="GO:0045892">
    <property type="term" value="P:negative regulation of DNA-templated transcription"/>
    <property type="evidence" value="ECO:0007669"/>
    <property type="project" value="UniProtKB-UniRule"/>
</dbReference>
<dbReference type="Gene3D" id="3.30.450.40">
    <property type="match status" value="1"/>
</dbReference>
<dbReference type="Gene3D" id="3.30.390.60">
    <property type="entry name" value="Heat-inducible transcription repressor hrca homolog, domain 3"/>
    <property type="match status" value="1"/>
</dbReference>
<dbReference type="Gene3D" id="1.10.10.10">
    <property type="entry name" value="Winged helix-like DNA-binding domain superfamily/Winged helix DNA-binding domain"/>
    <property type="match status" value="1"/>
</dbReference>
<dbReference type="HAMAP" id="MF_00081">
    <property type="entry name" value="HrcA"/>
    <property type="match status" value="1"/>
</dbReference>
<dbReference type="InterPro" id="IPR001034">
    <property type="entry name" value="DeoR_HTH"/>
</dbReference>
<dbReference type="InterPro" id="IPR029016">
    <property type="entry name" value="GAF-like_dom_sf"/>
</dbReference>
<dbReference type="InterPro" id="IPR002571">
    <property type="entry name" value="HrcA"/>
</dbReference>
<dbReference type="InterPro" id="IPR021153">
    <property type="entry name" value="HrcA_C"/>
</dbReference>
<dbReference type="InterPro" id="IPR036388">
    <property type="entry name" value="WH-like_DNA-bd_sf"/>
</dbReference>
<dbReference type="InterPro" id="IPR036390">
    <property type="entry name" value="WH_DNA-bd_sf"/>
</dbReference>
<dbReference type="InterPro" id="IPR023120">
    <property type="entry name" value="WHTH_transcript_rep_HrcA_IDD"/>
</dbReference>
<dbReference type="NCBIfam" id="TIGR00331">
    <property type="entry name" value="hrcA"/>
    <property type="match status" value="1"/>
</dbReference>
<dbReference type="PANTHER" id="PTHR34824">
    <property type="entry name" value="HEAT-INDUCIBLE TRANSCRIPTION REPRESSOR HRCA"/>
    <property type="match status" value="1"/>
</dbReference>
<dbReference type="PANTHER" id="PTHR34824:SF1">
    <property type="entry name" value="HEAT-INDUCIBLE TRANSCRIPTION REPRESSOR HRCA"/>
    <property type="match status" value="1"/>
</dbReference>
<dbReference type="Pfam" id="PF01628">
    <property type="entry name" value="HrcA"/>
    <property type="match status" value="1"/>
</dbReference>
<dbReference type="Pfam" id="PF08220">
    <property type="entry name" value="HTH_DeoR"/>
    <property type="match status" value="1"/>
</dbReference>
<dbReference type="PIRSF" id="PIRSF005485">
    <property type="entry name" value="HrcA"/>
    <property type="match status" value="1"/>
</dbReference>
<dbReference type="SUPFAM" id="SSF55781">
    <property type="entry name" value="GAF domain-like"/>
    <property type="match status" value="1"/>
</dbReference>
<dbReference type="SUPFAM" id="SSF46785">
    <property type="entry name" value="Winged helix' DNA-binding domain"/>
    <property type="match status" value="1"/>
</dbReference>
<organism>
    <name type="scientific">Pediococcus pentosaceus (strain ATCC 25745 / CCUG 21536 / LMG 10740 / 183-1w)</name>
    <dbReference type="NCBI Taxonomy" id="278197"/>
    <lineage>
        <taxon>Bacteria</taxon>
        <taxon>Bacillati</taxon>
        <taxon>Bacillota</taxon>
        <taxon>Bacilli</taxon>
        <taxon>Lactobacillales</taxon>
        <taxon>Lactobacillaceae</taxon>
        <taxon>Pediococcus</taxon>
    </lineage>
</organism>
<evidence type="ECO:0000255" key="1">
    <source>
        <dbReference type="HAMAP-Rule" id="MF_00081"/>
    </source>
</evidence>
<accession>Q03FR9</accession>
<name>HRCA_PEDPA</name>
<feature type="chain" id="PRO_1000010440" description="Heat-inducible transcription repressor HrcA">
    <location>
        <begin position="1"/>
        <end position="346"/>
    </location>
</feature>